<gene>
    <name evidence="1" type="primary">lexA</name>
    <name type="ordered locus">SeSA_A4429</name>
</gene>
<comment type="function">
    <text evidence="1">Represses a number of genes involved in the response to DNA damage (SOS response), including recA and lexA. Binds to the 16 bp palindromic sequence 5'-CTGTATATATATACAG-3'. In the presence of single-stranded DNA, RecA interacts with LexA causing an autocatalytic cleavage which disrupts the DNA-binding part of LexA, leading to derepression of the SOS regulon and eventually DNA repair.</text>
</comment>
<comment type="catalytic activity">
    <reaction evidence="1">
        <text>Hydrolysis of Ala-|-Gly bond in repressor LexA.</text>
        <dbReference type="EC" id="3.4.21.88"/>
    </reaction>
</comment>
<comment type="subunit">
    <text evidence="1">Homodimer.</text>
</comment>
<comment type="similarity">
    <text evidence="1">Belongs to the peptidase S24 family.</text>
</comment>
<accession>B4TQQ5</accession>
<organism>
    <name type="scientific">Salmonella schwarzengrund (strain CVM19633)</name>
    <dbReference type="NCBI Taxonomy" id="439843"/>
    <lineage>
        <taxon>Bacteria</taxon>
        <taxon>Pseudomonadati</taxon>
        <taxon>Pseudomonadota</taxon>
        <taxon>Gammaproteobacteria</taxon>
        <taxon>Enterobacterales</taxon>
        <taxon>Enterobacteriaceae</taxon>
        <taxon>Salmonella</taxon>
    </lineage>
</organism>
<protein>
    <recommendedName>
        <fullName evidence="1">LexA repressor</fullName>
        <ecNumber evidence="1">3.4.21.88</ecNumber>
    </recommendedName>
</protein>
<name>LEXA_SALSV</name>
<feature type="chain" id="PRO_1000089597" description="LexA repressor">
    <location>
        <begin position="1"/>
        <end position="202"/>
    </location>
</feature>
<feature type="DNA-binding region" description="H-T-H motif" evidence="1">
    <location>
        <begin position="28"/>
        <end position="48"/>
    </location>
</feature>
<feature type="active site" description="For autocatalytic cleavage activity" evidence="1">
    <location>
        <position position="119"/>
    </location>
</feature>
<feature type="active site" description="For autocatalytic cleavage activity" evidence="1">
    <location>
        <position position="156"/>
    </location>
</feature>
<feature type="site" description="Cleavage; by autolysis" evidence="1">
    <location>
        <begin position="84"/>
        <end position="85"/>
    </location>
</feature>
<keyword id="KW-0068">Autocatalytic cleavage</keyword>
<keyword id="KW-0227">DNA damage</keyword>
<keyword id="KW-0234">DNA repair</keyword>
<keyword id="KW-0235">DNA replication</keyword>
<keyword id="KW-0238">DNA-binding</keyword>
<keyword id="KW-0378">Hydrolase</keyword>
<keyword id="KW-0678">Repressor</keyword>
<keyword id="KW-0742">SOS response</keyword>
<keyword id="KW-0804">Transcription</keyword>
<keyword id="KW-0805">Transcription regulation</keyword>
<evidence type="ECO:0000255" key="1">
    <source>
        <dbReference type="HAMAP-Rule" id="MF_00015"/>
    </source>
</evidence>
<proteinExistence type="inferred from homology"/>
<dbReference type="EC" id="3.4.21.88" evidence="1"/>
<dbReference type="EMBL" id="CP001127">
    <property type="protein sequence ID" value="ACF93006.1"/>
    <property type="molecule type" value="Genomic_DNA"/>
</dbReference>
<dbReference type="RefSeq" id="WP_000646079.1">
    <property type="nucleotide sequence ID" value="NC_011094.1"/>
</dbReference>
<dbReference type="SMR" id="B4TQQ5"/>
<dbReference type="MEROPS" id="S24.001"/>
<dbReference type="KEGG" id="sew:SeSA_A4429"/>
<dbReference type="HOGENOM" id="CLU_066192_45_3_6"/>
<dbReference type="Proteomes" id="UP000001865">
    <property type="component" value="Chromosome"/>
</dbReference>
<dbReference type="GO" id="GO:0003677">
    <property type="term" value="F:DNA binding"/>
    <property type="evidence" value="ECO:0007669"/>
    <property type="project" value="UniProtKB-UniRule"/>
</dbReference>
<dbReference type="GO" id="GO:0004252">
    <property type="term" value="F:serine-type endopeptidase activity"/>
    <property type="evidence" value="ECO:0007669"/>
    <property type="project" value="UniProtKB-UniRule"/>
</dbReference>
<dbReference type="GO" id="GO:0006281">
    <property type="term" value="P:DNA repair"/>
    <property type="evidence" value="ECO:0007669"/>
    <property type="project" value="UniProtKB-UniRule"/>
</dbReference>
<dbReference type="GO" id="GO:0006260">
    <property type="term" value="P:DNA replication"/>
    <property type="evidence" value="ECO:0007669"/>
    <property type="project" value="UniProtKB-UniRule"/>
</dbReference>
<dbReference type="GO" id="GO:0045892">
    <property type="term" value="P:negative regulation of DNA-templated transcription"/>
    <property type="evidence" value="ECO:0007669"/>
    <property type="project" value="UniProtKB-UniRule"/>
</dbReference>
<dbReference type="GO" id="GO:0006508">
    <property type="term" value="P:proteolysis"/>
    <property type="evidence" value="ECO:0007669"/>
    <property type="project" value="InterPro"/>
</dbReference>
<dbReference type="GO" id="GO:0009432">
    <property type="term" value="P:SOS response"/>
    <property type="evidence" value="ECO:0007669"/>
    <property type="project" value="UniProtKB-UniRule"/>
</dbReference>
<dbReference type="CDD" id="cd06529">
    <property type="entry name" value="S24_LexA-like"/>
    <property type="match status" value="1"/>
</dbReference>
<dbReference type="FunFam" id="1.10.10.10:FF:000009">
    <property type="entry name" value="LexA repressor"/>
    <property type="match status" value="1"/>
</dbReference>
<dbReference type="FunFam" id="2.10.109.10:FF:000001">
    <property type="entry name" value="LexA repressor"/>
    <property type="match status" value="1"/>
</dbReference>
<dbReference type="Gene3D" id="2.10.109.10">
    <property type="entry name" value="Umud Fragment, subunit A"/>
    <property type="match status" value="1"/>
</dbReference>
<dbReference type="Gene3D" id="1.10.10.10">
    <property type="entry name" value="Winged helix-like DNA-binding domain superfamily/Winged helix DNA-binding domain"/>
    <property type="match status" value="1"/>
</dbReference>
<dbReference type="HAMAP" id="MF_00015">
    <property type="entry name" value="LexA"/>
    <property type="match status" value="1"/>
</dbReference>
<dbReference type="InterPro" id="IPR006200">
    <property type="entry name" value="LexA"/>
</dbReference>
<dbReference type="InterPro" id="IPR039418">
    <property type="entry name" value="LexA-like"/>
</dbReference>
<dbReference type="InterPro" id="IPR036286">
    <property type="entry name" value="LexA/Signal_pep-like_sf"/>
</dbReference>
<dbReference type="InterPro" id="IPR006199">
    <property type="entry name" value="LexA_DNA-bd_dom"/>
</dbReference>
<dbReference type="InterPro" id="IPR050077">
    <property type="entry name" value="LexA_repressor"/>
</dbReference>
<dbReference type="InterPro" id="IPR006197">
    <property type="entry name" value="Peptidase_S24_LexA"/>
</dbReference>
<dbReference type="InterPro" id="IPR015927">
    <property type="entry name" value="Peptidase_S24_S26A/B/C"/>
</dbReference>
<dbReference type="InterPro" id="IPR036388">
    <property type="entry name" value="WH-like_DNA-bd_sf"/>
</dbReference>
<dbReference type="InterPro" id="IPR036390">
    <property type="entry name" value="WH_DNA-bd_sf"/>
</dbReference>
<dbReference type="NCBIfam" id="TIGR00498">
    <property type="entry name" value="lexA"/>
    <property type="match status" value="1"/>
</dbReference>
<dbReference type="PANTHER" id="PTHR33516">
    <property type="entry name" value="LEXA REPRESSOR"/>
    <property type="match status" value="1"/>
</dbReference>
<dbReference type="PANTHER" id="PTHR33516:SF2">
    <property type="entry name" value="LEXA REPRESSOR-RELATED"/>
    <property type="match status" value="1"/>
</dbReference>
<dbReference type="Pfam" id="PF01726">
    <property type="entry name" value="LexA_DNA_bind"/>
    <property type="match status" value="1"/>
</dbReference>
<dbReference type="Pfam" id="PF00717">
    <property type="entry name" value="Peptidase_S24"/>
    <property type="match status" value="1"/>
</dbReference>
<dbReference type="PRINTS" id="PR00726">
    <property type="entry name" value="LEXASERPTASE"/>
</dbReference>
<dbReference type="SUPFAM" id="SSF51306">
    <property type="entry name" value="LexA/Signal peptidase"/>
    <property type="match status" value="1"/>
</dbReference>
<dbReference type="SUPFAM" id="SSF46785">
    <property type="entry name" value="Winged helix' DNA-binding domain"/>
    <property type="match status" value="1"/>
</dbReference>
<sequence>MKALTARQQEVFDLIRDHISQTGMPPTRAEIAQRLGFRSPNAAEEHLKALARKGVLEIVSGASRGIRLLQEEEDGLPLVGRVAAGEPLLAQQHIEGHYQVDPSLFKPSADFLLRVSGMSMKDIGIMDGDLLAVHKTQDVRNGQVVVARIDDEVTVKRLKKQGNKVELLPENSEFTPIVVDLREQSFTIEGLAVGVIRNGEWL</sequence>
<reference key="1">
    <citation type="journal article" date="2011" name="J. Bacteriol.">
        <title>Comparative genomics of 28 Salmonella enterica isolates: evidence for CRISPR-mediated adaptive sublineage evolution.</title>
        <authorList>
            <person name="Fricke W.F."/>
            <person name="Mammel M.K."/>
            <person name="McDermott P.F."/>
            <person name="Tartera C."/>
            <person name="White D.G."/>
            <person name="Leclerc J.E."/>
            <person name="Ravel J."/>
            <person name="Cebula T.A."/>
        </authorList>
    </citation>
    <scope>NUCLEOTIDE SEQUENCE [LARGE SCALE GENOMIC DNA]</scope>
    <source>
        <strain>CVM19633</strain>
    </source>
</reference>